<name>RPOZ_ACIBY</name>
<sequence length="92" mass="10445">MARVTVEDCLDHVDNRFELVLVASKRARQLARQGMEPTVEWDNDKPTVVALREIAVGHVTKEILKQREQDYQTSSLDLALSTNSLNLEGFSF</sequence>
<dbReference type="EC" id="2.7.7.6" evidence="1"/>
<dbReference type="EMBL" id="CU459141">
    <property type="protein sequence ID" value="CAM85289.1"/>
    <property type="molecule type" value="Genomic_DNA"/>
</dbReference>
<dbReference type="RefSeq" id="WP_000135049.1">
    <property type="nucleotide sequence ID" value="NZ_JBDGFB010000011.1"/>
</dbReference>
<dbReference type="SMR" id="B0V8M2"/>
<dbReference type="EnsemblBacteria" id="CAM85289">
    <property type="protein sequence ID" value="CAM85289"/>
    <property type="gene ID" value="ABAYE0311"/>
</dbReference>
<dbReference type="GeneID" id="92895409"/>
<dbReference type="KEGG" id="aby:ABAYE0311"/>
<dbReference type="HOGENOM" id="CLU_125406_5_3_6"/>
<dbReference type="GO" id="GO:0000428">
    <property type="term" value="C:DNA-directed RNA polymerase complex"/>
    <property type="evidence" value="ECO:0007669"/>
    <property type="project" value="UniProtKB-KW"/>
</dbReference>
<dbReference type="GO" id="GO:0003677">
    <property type="term" value="F:DNA binding"/>
    <property type="evidence" value="ECO:0007669"/>
    <property type="project" value="UniProtKB-UniRule"/>
</dbReference>
<dbReference type="GO" id="GO:0003899">
    <property type="term" value="F:DNA-directed RNA polymerase activity"/>
    <property type="evidence" value="ECO:0007669"/>
    <property type="project" value="UniProtKB-UniRule"/>
</dbReference>
<dbReference type="GO" id="GO:0006351">
    <property type="term" value="P:DNA-templated transcription"/>
    <property type="evidence" value="ECO:0007669"/>
    <property type="project" value="UniProtKB-UniRule"/>
</dbReference>
<dbReference type="Gene3D" id="3.90.940.10">
    <property type="match status" value="1"/>
</dbReference>
<dbReference type="HAMAP" id="MF_00366">
    <property type="entry name" value="RNApol_bact_RpoZ"/>
    <property type="match status" value="1"/>
</dbReference>
<dbReference type="InterPro" id="IPR003716">
    <property type="entry name" value="DNA-dir_RNA_pol_omega"/>
</dbReference>
<dbReference type="InterPro" id="IPR006110">
    <property type="entry name" value="Pol_omega/Rpo6/RPB6"/>
</dbReference>
<dbReference type="InterPro" id="IPR036161">
    <property type="entry name" value="RPB6/omega-like_sf"/>
</dbReference>
<dbReference type="NCBIfam" id="TIGR00690">
    <property type="entry name" value="rpoZ"/>
    <property type="match status" value="1"/>
</dbReference>
<dbReference type="PANTHER" id="PTHR34476">
    <property type="entry name" value="DNA-DIRECTED RNA POLYMERASE SUBUNIT OMEGA"/>
    <property type="match status" value="1"/>
</dbReference>
<dbReference type="PANTHER" id="PTHR34476:SF1">
    <property type="entry name" value="DNA-DIRECTED RNA POLYMERASE SUBUNIT OMEGA"/>
    <property type="match status" value="1"/>
</dbReference>
<dbReference type="Pfam" id="PF01192">
    <property type="entry name" value="RNA_pol_Rpb6"/>
    <property type="match status" value="1"/>
</dbReference>
<dbReference type="SMART" id="SM01409">
    <property type="entry name" value="RNA_pol_Rpb6"/>
    <property type="match status" value="1"/>
</dbReference>
<dbReference type="SUPFAM" id="SSF63562">
    <property type="entry name" value="RPB6/omega subunit-like"/>
    <property type="match status" value="1"/>
</dbReference>
<feature type="chain" id="PRO_1000121178" description="DNA-directed RNA polymerase subunit omega">
    <location>
        <begin position="1"/>
        <end position="92"/>
    </location>
</feature>
<gene>
    <name evidence="1" type="primary">rpoZ</name>
    <name type="ordered locus">ABAYE0311</name>
</gene>
<protein>
    <recommendedName>
        <fullName evidence="1">DNA-directed RNA polymerase subunit omega</fullName>
        <shortName evidence="1">RNAP omega subunit</shortName>
        <ecNumber evidence="1">2.7.7.6</ecNumber>
    </recommendedName>
    <alternativeName>
        <fullName evidence="1">RNA polymerase omega subunit</fullName>
    </alternativeName>
    <alternativeName>
        <fullName evidence="1">Transcriptase subunit omega</fullName>
    </alternativeName>
</protein>
<comment type="function">
    <text evidence="1">Promotes RNA polymerase assembly. Latches the N- and C-terminal regions of the beta' subunit thereby facilitating its interaction with the beta and alpha subunits.</text>
</comment>
<comment type="catalytic activity">
    <reaction evidence="1">
        <text>RNA(n) + a ribonucleoside 5'-triphosphate = RNA(n+1) + diphosphate</text>
        <dbReference type="Rhea" id="RHEA:21248"/>
        <dbReference type="Rhea" id="RHEA-COMP:14527"/>
        <dbReference type="Rhea" id="RHEA-COMP:17342"/>
        <dbReference type="ChEBI" id="CHEBI:33019"/>
        <dbReference type="ChEBI" id="CHEBI:61557"/>
        <dbReference type="ChEBI" id="CHEBI:140395"/>
        <dbReference type="EC" id="2.7.7.6"/>
    </reaction>
</comment>
<comment type="subunit">
    <text evidence="1">The RNAP catalytic core consists of 2 alpha, 1 beta, 1 beta' and 1 omega subunit. When a sigma factor is associated with the core the holoenzyme is formed, which can initiate transcription.</text>
</comment>
<comment type="similarity">
    <text evidence="1">Belongs to the RNA polymerase subunit omega family.</text>
</comment>
<keyword id="KW-0240">DNA-directed RNA polymerase</keyword>
<keyword id="KW-0548">Nucleotidyltransferase</keyword>
<keyword id="KW-0804">Transcription</keyword>
<keyword id="KW-0808">Transferase</keyword>
<organism>
    <name type="scientific">Acinetobacter baumannii (strain AYE)</name>
    <dbReference type="NCBI Taxonomy" id="509173"/>
    <lineage>
        <taxon>Bacteria</taxon>
        <taxon>Pseudomonadati</taxon>
        <taxon>Pseudomonadota</taxon>
        <taxon>Gammaproteobacteria</taxon>
        <taxon>Moraxellales</taxon>
        <taxon>Moraxellaceae</taxon>
        <taxon>Acinetobacter</taxon>
        <taxon>Acinetobacter calcoaceticus/baumannii complex</taxon>
    </lineage>
</organism>
<accession>B0V8M2</accession>
<proteinExistence type="inferred from homology"/>
<reference key="1">
    <citation type="journal article" date="2008" name="PLoS ONE">
        <title>Comparative analysis of Acinetobacters: three genomes for three lifestyles.</title>
        <authorList>
            <person name="Vallenet D."/>
            <person name="Nordmann P."/>
            <person name="Barbe V."/>
            <person name="Poirel L."/>
            <person name="Mangenot S."/>
            <person name="Bataille E."/>
            <person name="Dossat C."/>
            <person name="Gas S."/>
            <person name="Kreimeyer A."/>
            <person name="Lenoble P."/>
            <person name="Oztas S."/>
            <person name="Poulain J."/>
            <person name="Segurens B."/>
            <person name="Robert C."/>
            <person name="Abergel C."/>
            <person name="Claverie J.-M."/>
            <person name="Raoult D."/>
            <person name="Medigue C."/>
            <person name="Weissenbach J."/>
            <person name="Cruveiller S."/>
        </authorList>
    </citation>
    <scope>NUCLEOTIDE SEQUENCE [LARGE SCALE GENOMIC DNA]</scope>
    <source>
        <strain>AYE</strain>
    </source>
</reference>
<evidence type="ECO:0000255" key="1">
    <source>
        <dbReference type="HAMAP-Rule" id="MF_00366"/>
    </source>
</evidence>